<comment type="function">
    <text evidence="1">Necessary for efficient RNA polymerase transcription elongation past template-encoded arresting sites. The arresting sites in DNA have the property of trapping a certain fraction of elongating RNA polymerases that pass through, resulting in locked ternary complexes. Cleavage of the nascent transcript by cleavage factors such as GreA or GreB allows the resumption of elongation from the new 3'terminus. GreA releases sequences of 2 to 3 nucleotides.</text>
</comment>
<comment type="similarity">
    <text evidence="1">Belongs to the GreA/GreB family.</text>
</comment>
<organism>
    <name type="scientific">Streptococcus agalactiae serotype Ia (strain ATCC 27591 / A909 / CDC SS700)</name>
    <dbReference type="NCBI Taxonomy" id="205921"/>
    <lineage>
        <taxon>Bacteria</taxon>
        <taxon>Bacillati</taxon>
        <taxon>Bacillota</taxon>
        <taxon>Bacilli</taxon>
        <taxon>Lactobacillales</taxon>
        <taxon>Streptococcaceae</taxon>
        <taxon>Streptococcus</taxon>
    </lineage>
</organism>
<protein>
    <recommendedName>
        <fullName evidence="1">Transcription elongation factor GreA</fullName>
    </recommendedName>
    <alternativeName>
        <fullName evidence="1">Transcript cleavage factor GreA</fullName>
    </alternativeName>
</protein>
<proteinExistence type="inferred from homology"/>
<evidence type="ECO:0000255" key="1">
    <source>
        <dbReference type="HAMAP-Rule" id="MF_00105"/>
    </source>
</evidence>
<reference key="1">
    <citation type="journal article" date="2005" name="Proc. Natl. Acad. Sci. U.S.A.">
        <title>Genome analysis of multiple pathogenic isolates of Streptococcus agalactiae: implications for the microbial 'pan-genome'.</title>
        <authorList>
            <person name="Tettelin H."/>
            <person name="Masignani V."/>
            <person name="Cieslewicz M.J."/>
            <person name="Donati C."/>
            <person name="Medini D."/>
            <person name="Ward N.L."/>
            <person name="Angiuoli S.V."/>
            <person name="Crabtree J."/>
            <person name="Jones A.L."/>
            <person name="Durkin A.S."/>
            <person name="DeBoy R.T."/>
            <person name="Davidsen T.M."/>
            <person name="Mora M."/>
            <person name="Scarselli M."/>
            <person name="Margarit y Ros I."/>
            <person name="Peterson J.D."/>
            <person name="Hauser C.R."/>
            <person name="Sundaram J.P."/>
            <person name="Nelson W.C."/>
            <person name="Madupu R."/>
            <person name="Brinkac L.M."/>
            <person name="Dodson R.J."/>
            <person name="Rosovitz M.J."/>
            <person name="Sullivan S.A."/>
            <person name="Daugherty S.C."/>
            <person name="Haft D.H."/>
            <person name="Selengut J."/>
            <person name="Gwinn M.L."/>
            <person name="Zhou L."/>
            <person name="Zafar N."/>
            <person name="Khouri H."/>
            <person name="Radune D."/>
            <person name="Dimitrov G."/>
            <person name="Watkins K."/>
            <person name="O'Connor K.J."/>
            <person name="Smith S."/>
            <person name="Utterback T.R."/>
            <person name="White O."/>
            <person name="Rubens C.E."/>
            <person name="Grandi G."/>
            <person name="Madoff L.C."/>
            <person name="Kasper D.L."/>
            <person name="Telford J.L."/>
            <person name="Wessels M.R."/>
            <person name="Rappuoli R."/>
            <person name="Fraser C.M."/>
        </authorList>
    </citation>
    <scope>NUCLEOTIDE SEQUENCE [LARGE SCALE GENOMIC DNA]</scope>
    <source>
        <strain>ATCC 27591 / A909 / CDC SS700</strain>
    </source>
</reference>
<dbReference type="EMBL" id="CP000114">
    <property type="protein sequence ID" value="ABA45491.1"/>
    <property type="molecule type" value="Genomic_DNA"/>
</dbReference>
<dbReference type="RefSeq" id="WP_000818772.1">
    <property type="nucleotide sequence ID" value="NC_007432.1"/>
</dbReference>
<dbReference type="SMR" id="Q3JZS3"/>
<dbReference type="GeneID" id="66886458"/>
<dbReference type="KEGG" id="sak:SAK_1627"/>
<dbReference type="HOGENOM" id="CLU_101379_2_1_9"/>
<dbReference type="GO" id="GO:0003677">
    <property type="term" value="F:DNA binding"/>
    <property type="evidence" value="ECO:0007669"/>
    <property type="project" value="UniProtKB-UniRule"/>
</dbReference>
<dbReference type="GO" id="GO:0070063">
    <property type="term" value="F:RNA polymerase binding"/>
    <property type="evidence" value="ECO:0007669"/>
    <property type="project" value="InterPro"/>
</dbReference>
<dbReference type="GO" id="GO:0006354">
    <property type="term" value="P:DNA-templated transcription elongation"/>
    <property type="evidence" value="ECO:0007669"/>
    <property type="project" value="TreeGrafter"/>
</dbReference>
<dbReference type="GO" id="GO:0032784">
    <property type="term" value="P:regulation of DNA-templated transcription elongation"/>
    <property type="evidence" value="ECO:0007669"/>
    <property type="project" value="UniProtKB-UniRule"/>
</dbReference>
<dbReference type="FunFam" id="1.10.287.180:FF:000001">
    <property type="entry name" value="Transcription elongation factor GreA"/>
    <property type="match status" value="1"/>
</dbReference>
<dbReference type="FunFam" id="3.10.50.30:FF:000001">
    <property type="entry name" value="Transcription elongation factor GreA"/>
    <property type="match status" value="1"/>
</dbReference>
<dbReference type="Gene3D" id="3.10.50.30">
    <property type="entry name" value="Transcription elongation factor, GreA/GreB, C-terminal domain"/>
    <property type="match status" value="1"/>
</dbReference>
<dbReference type="Gene3D" id="1.10.287.180">
    <property type="entry name" value="Transcription elongation factor, GreA/GreB, N-terminal domain"/>
    <property type="match status" value="1"/>
</dbReference>
<dbReference type="HAMAP" id="MF_00105">
    <property type="entry name" value="GreA_GreB"/>
    <property type="match status" value="1"/>
</dbReference>
<dbReference type="InterPro" id="IPR036953">
    <property type="entry name" value="GreA/GreB_C_sf"/>
</dbReference>
<dbReference type="InterPro" id="IPR018151">
    <property type="entry name" value="TF_GreA/GreB_CS"/>
</dbReference>
<dbReference type="InterPro" id="IPR006359">
    <property type="entry name" value="Tscrpt_elong_fac_GreA"/>
</dbReference>
<dbReference type="InterPro" id="IPR028624">
    <property type="entry name" value="Tscrpt_elong_fac_GreA/B"/>
</dbReference>
<dbReference type="InterPro" id="IPR001437">
    <property type="entry name" value="Tscrpt_elong_fac_GreA/B_C"/>
</dbReference>
<dbReference type="InterPro" id="IPR023459">
    <property type="entry name" value="Tscrpt_elong_fac_GreA/B_fam"/>
</dbReference>
<dbReference type="InterPro" id="IPR022691">
    <property type="entry name" value="Tscrpt_elong_fac_GreA/B_N"/>
</dbReference>
<dbReference type="InterPro" id="IPR036805">
    <property type="entry name" value="Tscrpt_elong_fac_GreA/B_N_sf"/>
</dbReference>
<dbReference type="NCBIfam" id="TIGR01462">
    <property type="entry name" value="greA"/>
    <property type="match status" value="1"/>
</dbReference>
<dbReference type="NCBIfam" id="NF001260">
    <property type="entry name" value="PRK00226.1-1"/>
    <property type="match status" value="1"/>
</dbReference>
<dbReference type="NCBIfam" id="NF001263">
    <property type="entry name" value="PRK00226.1-4"/>
    <property type="match status" value="1"/>
</dbReference>
<dbReference type="PANTHER" id="PTHR30437">
    <property type="entry name" value="TRANSCRIPTION ELONGATION FACTOR GREA"/>
    <property type="match status" value="1"/>
</dbReference>
<dbReference type="PANTHER" id="PTHR30437:SF4">
    <property type="entry name" value="TRANSCRIPTION ELONGATION FACTOR GREA"/>
    <property type="match status" value="1"/>
</dbReference>
<dbReference type="Pfam" id="PF01272">
    <property type="entry name" value="GreA_GreB"/>
    <property type="match status" value="1"/>
</dbReference>
<dbReference type="Pfam" id="PF03449">
    <property type="entry name" value="GreA_GreB_N"/>
    <property type="match status" value="1"/>
</dbReference>
<dbReference type="PIRSF" id="PIRSF006092">
    <property type="entry name" value="GreA_GreB"/>
    <property type="match status" value="1"/>
</dbReference>
<dbReference type="SUPFAM" id="SSF54534">
    <property type="entry name" value="FKBP-like"/>
    <property type="match status" value="1"/>
</dbReference>
<dbReference type="SUPFAM" id="SSF46557">
    <property type="entry name" value="GreA transcript cleavage protein, N-terminal domain"/>
    <property type="match status" value="1"/>
</dbReference>
<dbReference type="PROSITE" id="PS00829">
    <property type="entry name" value="GREAB_1"/>
    <property type="match status" value="1"/>
</dbReference>
<dbReference type="PROSITE" id="PS00830">
    <property type="entry name" value="GREAB_2"/>
    <property type="match status" value="1"/>
</dbReference>
<name>GREA_STRA1</name>
<sequence length="160" mass="17600">MAEKTYPMTQVEKDQLEKELEELKLVRRPEVVERIKIARSYGDLSENSEYDAAKDEQAFVEGQIQILETKIRYAEIIDSDAVAKDEVAIGKTVLVQEVGTNDKDTYHIVGAAGADIFSGKISNESPIAHALIGKKTGDLATIESPAGSYQVEIISVEKTN</sequence>
<gene>
    <name evidence="1" type="primary">greA</name>
    <name type="ordered locus">SAK_1627</name>
</gene>
<feature type="chain" id="PRO_1000034303" description="Transcription elongation factor GreA">
    <location>
        <begin position="1"/>
        <end position="160"/>
    </location>
</feature>
<feature type="coiled-coil region" evidence="1">
    <location>
        <begin position="1"/>
        <end position="72"/>
    </location>
</feature>
<accession>Q3JZS3</accession>
<keyword id="KW-0175">Coiled coil</keyword>
<keyword id="KW-0238">DNA-binding</keyword>
<keyword id="KW-0804">Transcription</keyword>
<keyword id="KW-0805">Transcription regulation</keyword>